<evidence type="ECO:0000255" key="1">
    <source>
        <dbReference type="HAMAP-Rule" id="MF_00686"/>
    </source>
</evidence>
<name>FETP_VIBCM</name>
<dbReference type="EMBL" id="CP001233">
    <property type="protein sequence ID" value="ACP04761.1"/>
    <property type="molecule type" value="Genomic_DNA"/>
</dbReference>
<dbReference type="RefSeq" id="WP_000124738.1">
    <property type="nucleotide sequence ID" value="NC_012578.1"/>
</dbReference>
<dbReference type="SMR" id="C3LRW8"/>
<dbReference type="KEGG" id="vcm:VCM66_0436"/>
<dbReference type="HOGENOM" id="CLU_170994_0_0_6"/>
<dbReference type="Proteomes" id="UP000001217">
    <property type="component" value="Chromosome I"/>
</dbReference>
<dbReference type="GO" id="GO:0005829">
    <property type="term" value="C:cytosol"/>
    <property type="evidence" value="ECO:0007669"/>
    <property type="project" value="TreeGrafter"/>
</dbReference>
<dbReference type="GO" id="GO:0005506">
    <property type="term" value="F:iron ion binding"/>
    <property type="evidence" value="ECO:0007669"/>
    <property type="project" value="UniProtKB-UniRule"/>
</dbReference>
<dbReference type="GO" id="GO:0034599">
    <property type="term" value="P:cellular response to oxidative stress"/>
    <property type="evidence" value="ECO:0007669"/>
    <property type="project" value="TreeGrafter"/>
</dbReference>
<dbReference type="FunFam" id="1.10.3880.10:FF:000001">
    <property type="entry name" value="Probable Fe(2+)-trafficking protein"/>
    <property type="match status" value="1"/>
</dbReference>
<dbReference type="Gene3D" id="1.10.3880.10">
    <property type="entry name" value="Fe(II) trafficking protein YggX"/>
    <property type="match status" value="1"/>
</dbReference>
<dbReference type="HAMAP" id="MF_00686">
    <property type="entry name" value="Fe_traffic_YggX"/>
    <property type="match status" value="1"/>
</dbReference>
<dbReference type="InterPro" id="IPR007457">
    <property type="entry name" value="Fe_traffick_prot_YggX"/>
</dbReference>
<dbReference type="InterPro" id="IPR036766">
    <property type="entry name" value="Fe_traffick_prot_YggX_sf"/>
</dbReference>
<dbReference type="NCBIfam" id="NF003817">
    <property type="entry name" value="PRK05408.1"/>
    <property type="match status" value="1"/>
</dbReference>
<dbReference type="PANTHER" id="PTHR36965">
    <property type="entry name" value="FE(2+)-TRAFFICKING PROTEIN-RELATED"/>
    <property type="match status" value="1"/>
</dbReference>
<dbReference type="PANTHER" id="PTHR36965:SF1">
    <property type="entry name" value="FE(2+)-TRAFFICKING PROTEIN-RELATED"/>
    <property type="match status" value="1"/>
</dbReference>
<dbReference type="Pfam" id="PF04362">
    <property type="entry name" value="Iron_traffic"/>
    <property type="match status" value="1"/>
</dbReference>
<dbReference type="PIRSF" id="PIRSF029827">
    <property type="entry name" value="Fe_traffic_YggX"/>
    <property type="match status" value="1"/>
</dbReference>
<dbReference type="SUPFAM" id="SSF111148">
    <property type="entry name" value="YggX-like"/>
    <property type="match status" value="1"/>
</dbReference>
<keyword id="KW-0408">Iron</keyword>
<comment type="function">
    <text evidence="1">Could be a mediator in iron transactions between iron acquisition and iron-requiring processes, such as synthesis and/or repair of Fe-S clusters in biosynthetic enzymes.</text>
</comment>
<comment type="similarity">
    <text evidence="1">Belongs to the Fe(2+)-trafficking protein family.</text>
</comment>
<reference key="1">
    <citation type="journal article" date="2008" name="PLoS ONE">
        <title>A recalibrated molecular clock and independent origins for the cholera pandemic clones.</title>
        <authorList>
            <person name="Feng L."/>
            <person name="Reeves P.R."/>
            <person name="Lan R."/>
            <person name="Ren Y."/>
            <person name="Gao C."/>
            <person name="Zhou Z."/>
            <person name="Ren Y."/>
            <person name="Cheng J."/>
            <person name="Wang W."/>
            <person name="Wang J."/>
            <person name="Qian W."/>
            <person name="Li D."/>
            <person name="Wang L."/>
        </authorList>
    </citation>
    <scope>NUCLEOTIDE SEQUENCE [LARGE SCALE GENOMIC DNA]</scope>
    <source>
        <strain>M66-2</strain>
    </source>
</reference>
<proteinExistence type="inferred from homology"/>
<protein>
    <recommendedName>
        <fullName evidence="1">Probable Fe(2+)-trafficking protein</fullName>
    </recommendedName>
</protein>
<accession>C3LRW8</accession>
<gene>
    <name type="ordered locus">VCM66_0436</name>
</gene>
<feature type="chain" id="PRO_1000147772" description="Probable Fe(2+)-trafficking protein">
    <location>
        <begin position="1"/>
        <end position="90"/>
    </location>
</feature>
<sequence>MARTVFCTRLQKEADGLDFQLYPGELGKRIFDNICKEAWAQWQTKQTMLINEKKLNMMDPEHRKLLEQEMVNFLFEGKEVHIEGYTPPAK</sequence>
<organism>
    <name type="scientific">Vibrio cholerae serotype O1 (strain M66-2)</name>
    <dbReference type="NCBI Taxonomy" id="579112"/>
    <lineage>
        <taxon>Bacteria</taxon>
        <taxon>Pseudomonadati</taxon>
        <taxon>Pseudomonadota</taxon>
        <taxon>Gammaproteobacteria</taxon>
        <taxon>Vibrionales</taxon>
        <taxon>Vibrionaceae</taxon>
        <taxon>Vibrio</taxon>
    </lineage>
</organism>